<protein>
    <recommendedName>
        <fullName>Uncharacterized protein 179</fullName>
    </recommendedName>
</protein>
<organism>
    <name type="scientific">Sulfolobus islandicus rod-shaped virus 1</name>
    <name type="common">SIRV-1</name>
    <name type="synonym">Sulfolobus virus SIRV-1</name>
    <dbReference type="NCBI Taxonomy" id="157898"/>
    <lineage>
        <taxon>Viruses</taxon>
        <taxon>Adnaviria</taxon>
        <taxon>Zilligvirae</taxon>
        <taxon>Taleaviricota</taxon>
        <taxon>Tokiviricetes</taxon>
        <taxon>Ligamenvirales</taxon>
        <taxon>Rudiviridae</taxon>
        <taxon>Icerudivirus</taxon>
        <taxon>Icerudivirus SIRV1</taxon>
    </lineage>
</organism>
<accession>Q8QL38</accession>
<dbReference type="EMBL" id="AJ414696">
    <property type="protein sequence ID" value="CAC93971.1"/>
    <property type="molecule type" value="Genomic_DNA"/>
</dbReference>
<dbReference type="RefSeq" id="NP_666604.1">
    <property type="nucleotide sequence ID" value="NC_004087.1"/>
</dbReference>
<dbReference type="KEGG" id="vg:951379"/>
<dbReference type="Proteomes" id="UP000002270">
    <property type="component" value="Genome"/>
</dbReference>
<organismHost>
    <name type="scientific">Saccharolobus islandicus</name>
    <name type="common">Sulfolobus islandicus</name>
    <dbReference type="NCBI Taxonomy" id="43080"/>
</organismHost>
<proteinExistence type="predicted"/>
<feature type="chain" id="PRO_0000342316" description="Uncharacterized protein 179">
    <location>
        <begin position="1"/>
        <end position="179"/>
    </location>
</feature>
<name>Y179_SIRV1</name>
<sequence>MSDEINKTQLKNIINAILEYKRVLVYRNEINGDIDNSYVLFYNEIDSNFDILTIPFVIENLREEKEFLKFLYESELFDIDNLSKLIVDFIDYKHRPCLLKGLVYVELLDLIKQYNYQITENNINFNKNRFTGEIRYIISIDSNKTAEIIKKIEYCNFCLYDRDINVGIQKCVTYKLKYS</sequence>
<gene>
    <name type="ORF">179</name>
</gene>
<reference key="1">
    <citation type="journal article" date="2001" name="Virology">
        <title>Sequences and replication of genomes of the archaeal rudiviruses SIRV1 and SIRV2: relationships to the archaeal lipothrixvirus SIFV and some eukaryal viruses.</title>
        <authorList>
            <person name="Peng X."/>
            <person name="Blum H."/>
            <person name="She Q."/>
            <person name="Mallok S."/>
            <person name="Bruegger K."/>
            <person name="Garrett R.A."/>
            <person name="Zillig W."/>
            <person name="Prangishvili D."/>
        </authorList>
    </citation>
    <scope>NUCLEOTIDE SEQUENCE [LARGE SCALE GENOMIC DNA]</scope>
    <source>
        <strain>Isolate variant VIII</strain>
    </source>
</reference>
<keyword id="KW-1185">Reference proteome</keyword>